<name>CDC2_VIGAC</name>
<comment type="function">
    <text>Plays a key role in the control of the eukaryotic cell cycle. Component of the kinase complex that phosphorylates the repetitive C-terminus of RNA polymerase II.</text>
</comment>
<comment type="catalytic activity">
    <reaction>
        <text>L-seryl-[protein] + ATP = O-phospho-L-seryl-[protein] + ADP + H(+)</text>
        <dbReference type="Rhea" id="RHEA:17989"/>
        <dbReference type="Rhea" id="RHEA-COMP:9863"/>
        <dbReference type="Rhea" id="RHEA-COMP:11604"/>
        <dbReference type="ChEBI" id="CHEBI:15378"/>
        <dbReference type="ChEBI" id="CHEBI:29999"/>
        <dbReference type="ChEBI" id="CHEBI:30616"/>
        <dbReference type="ChEBI" id="CHEBI:83421"/>
        <dbReference type="ChEBI" id="CHEBI:456216"/>
        <dbReference type="EC" id="2.7.11.22"/>
    </reaction>
</comment>
<comment type="catalytic activity">
    <reaction>
        <text>L-threonyl-[protein] + ATP = O-phospho-L-threonyl-[protein] + ADP + H(+)</text>
        <dbReference type="Rhea" id="RHEA:46608"/>
        <dbReference type="Rhea" id="RHEA-COMP:11060"/>
        <dbReference type="Rhea" id="RHEA-COMP:11605"/>
        <dbReference type="ChEBI" id="CHEBI:15378"/>
        <dbReference type="ChEBI" id="CHEBI:30013"/>
        <dbReference type="ChEBI" id="CHEBI:30616"/>
        <dbReference type="ChEBI" id="CHEBI:61977"/>
        <dbReference type="ChEBI" id="CHEBI:456216"/>
        <dbReference type="EC" id="2.7.11.22"/>
    </reaction>
</comment>
<comment type="catalytic activity">
    <reaction>
        <text>[DNA-directed RNA polymerase] + ATP = phospho-[DNA-directed RNA polymerase] + ADP + H(+)</text>
        <dbReference type="Rhea" id="RHEA:10216"/>
        <dbReference type="Rhea" id="RHEA-COMP:11321"/>
        <dbReference type="Rhea" id="RHEA-COMP:11322"/>
        <dbReference type="ChEBI" id="CHEBI:15378"/>
        <dbReference type="ChEBI" id="CHEBI:30616"/>
        <dbReference type="ChEBI" id="CHEBI:43176"/>
        <dbReference type="ChEBI" id="CHEBI:68546"/>
        <dbReference type="ChEBI" id="CHEBI:456216"/>
        <dbReference type="EC" id="2.7.11.23"/>
    </reaction>
</comment>
<comment type="activity regulation">
    <text evidence="1">Phosphorylation at Thr-14 or Tyr-15 inactivates the enzyme, while phosphorylation at Thr-161 activates it.</text>
</comment>
<comment type="similarity">
    <text evidence="4">Belongs to the protein kinase superfamily. CMGC Ser/Thr protein kinase family. CDC2/CDKX subfamily.</text>
</comment>
<keyword id="KW-0067">ATP-binding</keyword>
<keyword id="KW-0131">Cell cycle</keyword>
<keyword id="KW-0132">Cell division</keyword>
<keyword id="KW-0418">Kinase</keyword>
<keyword id="KW-0498">Mitosis</keyword>
<keyword id="KW-0547">Nucleotide-binding</keyword>
<keyword id="KW-0597">Phosphoprotein</keyword>
<keyword id="KW-0723">Serine/threonine-protein kinase</keyword>
<keyword id="KW-0808">Transferase</keyword>
<reference key="1">
    <citation type="journal article" date="1993" name="Plant Physiol.">
        <title>p34cdc2 protein kinase homolog from mothbean (Vigna aconitifolia).</title>
        <authorList>
            <person name="Hong Z."/>
            <person name="Miao G.-H."/>
            <person name="Verma D.P.S."/>
        </authorList>
    </citation>
    <scope>NUCLEOTIDE SEQUENCE [MRNA]</scope>
    <source>
        <tissue>Root nodule</tissue>
    </source>
</reference>
<dbReference type="EC" id="2.7.11.22"/>
<dbReference type="EC" id="2.7.11.23"/>
<dbReference type="EMBL" id="M99497">
    <property type="protein sequence ID" value="AAA34241.1"/>
    <property type="molecule type" value="mRNA"/>
</dbReference>
<dbReference type="PIR" id="JQ2243">
    <property type="entry name" value="JQ2243"/>
</dbReference>
<dbReference type="SMR" id="Q41639"/>
<dbReference type="BRENDA" id="2.7.11.22">
    <property type="organism ID" value="6650"/>
</dbReference>
<dbReference type="GO" id="GO:0000307">
    <property type="term" value="C:cyclin-dependent protein kinase holoenzyme complex"/>
    <property type="evidence" value="ECO:0007669"/>
    <property type="project" value="TreeGrafter"/>
</dbReference>
<dbReference type="GO" id="GO:0005737">
    <property type="term" value="C:cytoplasm"/>
    <property type="evidence" value="ECO:0007669"/>
    <property type="project" value="TreeGrafter"/>
</dbReference>
<dbReference type="GO" id="GO:0005634">
    <property type="term" value="C:nucleus"/>
    <property type="evidence" value="ECO:0007669"/>
    <property type="project" value="TreeGrafter"/>
</dbReference>
<dbReference type="GO" id="GO:0005524">
    <property type="term" value="F:ATP binding"/>
    <property type="evidence" value="ECO:0007669"/>
    <property type="project" value="UniProtKB-KW"/>
</dbReference>
<dbReference type="GO" id="GO:0030332">
    <property type="term" value="F:cyclin binding"/>
    <property type="evidence" value="ECO:0007669"/>
    <property type="project" value="TreeGrafter"/>
</dbReference>
<dbReference type="GO" id="GO:0004693">
    <property type="term" value="F:cyclin-dependent protein serine/threonine kinase activity"/>
    <property type="evidence" value="ECO:0007669"/>
    <property type="project" value="UniProtKB-EC"/>
</dbReference>
<dbReference type="GO" id="GO:0106310">
    <property type="term" value="F:protein serine kinase activity"/>
    <property type="evidence" value="ECO:0007669"/>
    <property type="project" value="RHEA"/>
</dbReference>
<dbReference type="GO" id="GO:0008353">
    <property type="term" value="F:RNA polymerase II CTD heptapeptide repeat kinase activity"/>
    <property type="evidence" value="ECO:0007669"/>
    <property type="project" value="UniProtKB-EC"/>
</dbReference>
<dbReference type="GO" id="GO:0051301">
    <property type="term" value="P:cell division"/>
    <property type="evidence" value="ECO:0007669"/>
    <property type="project" value="UniProtKB-KW"/>
</dbReference>
<dbReference type="GO" id="GO:0000082">
    <property type="term" value="P:G1/S transition of mitotic cell cycle"/>
    <property type="evidence" value="ECO:0007669"/>
    <property type="project" value="TreeGrafter"/>
</dbReference>
<dbReference type="GO" id="GO:0010389">
    <property type="term" value="P:regulation of G2/M transition of mitotic cell cycle"/>
    <property type="evidence" value="ECO:0007669"/>
    <property type="project" value="TreeGrafter"/>
</dbReference>
<dbReference type="GO" id="GO:0051445">
    <property type="term" value="P:regulation of meiotic cell cycle"/>
    <property type="evidence" value="ECO:0007669"/>
    <property type="project" value="TreeGrafter"/>
</dbReference>
<dbReference type="GO" id="GO:0007165">
    <property type="term" value="P:signal transduction"/>
    <property type="evidence" value="ECO:0007669"/>
    <property type="project" value="TreeGrafter"/>
</dbReference>
<dbReference type="CDD" id="cd07835">
    <property type="entry name" value="STKc_CDK1_CdkB_like"/>
    <property type="match status" value="1"/>
</dbReference>
<dbReference type="FunFam" id="3.30.200.20:FF:000187">
    <property type="entry name" value="Cell division control protein 2"/>
    <property type="match status" value="1"/>
</dbReference>
<dbReference type="FunFam" id="1.10.510.10:FF:000280">
    <property type="entry name" value="Cell division control protein 2 homolog"/>
    <property type="match status" value="1"/>
</dbReference>
<dbReference type="Gene3D" id="3.30.200.20">
    <property type="entry name" value="Phosphorylase Kinase, domain 1"/>
    <property type="match status" value="1"/>
</dbReference>
<dbReference type="Gene3D" id="1.10.510.10">
    <property type="entry name" value="Transferase(Phosphotransferase) domain 1"/>
    <property type="match status" value="1"/>
</dbReference>
<dbReference type="InterPro" id="IPR050108">
    <property type="entry name" value="CDK"/>
</dbReference>
<dbReference type="InterPro" id="IPR011009">
    <property type="entry name" value="Kinase-like_dom_sf"/>
</dbReference>
<dbReference type="InterPro" id="IPR000719">
    <property type="entry name" value="Prot_kinase_dom"/>
</dbReference>
<dbReference type="InterPro" id="IPR017441">
    <property type="entry name" value="Protein_kinase_ATP_BS"/>
</dbReference>
<dbReference type="InterPro" id="IPR008271">
    <property type="entry name" value="Ser/Thr_kinase_AS"/>
</dbReference>
<dbReference type="PANTHER" id="PTHR24056">
    <property type="entry name" value="CELL DIVISION PROTEIN KINASE"/>
    <property type="match status" value="1"/>
</dbReference>
<dbReference type="PANTHER" id="PTHR24056:SF548">
    <property type="entry name" value="CYCLIN-DEPENDENT KINASE A-1"/>
    <property type="match status" value="1"/>
</dbReference>
<dbReference type="Pfam" id="PF00069">
    <property type="entry name" value="Pkinase"/>
    <property type="match status" value="1"/>
</dbReference>
<dbReference type="SMART" id="SM00220">
    <property type="entry name" value="S_TKc"/>
    <property type="match status" value="1"/>
</dbReference>
<dbReference type="SUPFAM" id="SSF56112">
    <property type="entry name" value="Protein kinase-like (PK-like)"/>
    <property type="match status" value="1"/>
</dbReference>
<dbReference type="PROSITE" id="PS00107">
    <property type="entry name" value="PROTEIN_KINASE_ATP"/>
    <property type="match status" value="1"/>
</dbReference>
<dbReference type="PROSITE" id="PS50011">
    <property type="entry name" value="PROTEIN_KINASE_DOM"/>
    <property type="match status" value="1"/>
</dbReference>
<dbReference type="PROSITE" id="PS00108">
    <property type="entry name" value="PROTEIN_KINASE_ST"/>
    <property type="match status" value="1"/>
</dbReference>
<gene>
    <name type="primary">CDC2</name>
</gene>
<evidence type="ECO:0000250" key="1"/>
<evidence type="ECO:0000255" key="2">
    <source>
        <dbReference type="PROSITE-ProRule" id="PRU00159"/>
    </source>
</evidence>
<evidence type="ECO:0000255" key="3">
    <source>
        <dbReference type="PROSITE-ProRule" id="PRU10027"/>
    </source>
</evidence>
<evidence type="ECO:0000305" key="4"/>
<feature type="chain" id="PRO_0000085760" description="Cell division control protein 2 homolog">
    <location>
        <begin position="1"/>
        <end position="294"/>
    </location>
</feature>
<feature type="domain" description="Protein kinase" evidence="2">
    <location>
        <begin position="4"/>
        <end position="287"/>
    </location>
</feature>
<feature type="active site" description="Proton acceptor" evidence="2 3">
    <location>
        <position position="127"/>
    </location>
</feature>
<feature type="binding site" evidence="2">
    <location>
        <begin position="10"/>
        <end position="18"/>
    </location>
    <ligand>
        <name>ATP</name>
        <dbReference type="ChEBI" id="CHEBI:30616"/>
    </ligand>
</feature>
<feature type="binding site" evidence="2">
    <location>
        <position position="33"/>
    </location>
    <ligand>
        <name>ATP</name>
        <dbReference type="ChEBI" id="CHEBI:30616"/>
    </ligand>
</feature>
<feature type="modified residue" description="Phosphothreonine" evidence="1">
    <location>
        <position position="14"/>
    </location>
</feature>
<feature type="modified residue" description="Phosphotyrosine" evidence="1">
    <location>
        <position position="15"/>
    </location>
</feature>
<feature type="modified residue" description="Phosphothreonine; by CAK" evidence="1">
    <location>
        <position position="161"/>
    </location>
</feature>
<protein>
    <recommendedName>
        <fullName>Cell division control protein 2 homolog</fullName>
        <ecNumber>2.7.11.22</ecNumber>
        <ecNumber>2.7.11.23</ecNumber>
    </recommendedName>
    <alternativeName>
        <fullName>p34cdc2</fullName>
    </alternativeName>
</protein>
<accession>Q41639</accession>
<organism>
    <name type="scientific">Vigna aconitifolia</name>
    <name type="common">Moth bean</name>
    <name type="synonym">Phaseolus aconitifolius</name>
    <dbReference type="NCBI Taxonomy" id="3918"/>
    <lineage>
        <taxon>Eukaryota</taxon>
        <taxon>Viridiplantae</taxon>
        <taxon>Streptophyta</taxon>
        <taxon>Embryophyta</taxon>
        <taxon>Tracheophyta</taxon>
        <taxon>Spermatophyta</taxon>
        <taxon>Magnoliopsida</taxon>
        <taxon>eudicotyledons</taxon>
        <taxon>Gunneridae</taxon>
        <taxon>Pentapetalae</taxon>
        <taxon>rosids</taxon>
        <taxon>fabids</taxon>
        <taxon>Fabales</taxon>
        <taxon>Fabaceae</taxon>
        <taxon>Papilionoideae</taxon>
        <taxon>50 kb inversion clade</taxon>
        <taxon>NPAAA clade</taxon>
        <taxon>indigoferoid/millettioid clade</taxon>
        <taxon>Phaseoleae</taxon>
        <taxon>Vigna</taxon>
    </lineage>
</organism>
<proteinExistence type="evidence at transcript level"/>
<sequence length="294" mass="33983">MEQYEKVEKIGEGTYGVVYKARDRVTNETIALKKIRLEQEDEGVPSTAIREISLLKEMQHRNIVRLQDVVHSEKRLYLVFEYLDLDLKKHMDSSPEFVKDPRQVKMFLYQILCGIAYCHSHRVLHRDLKPQNLLIDRRTNSLKLADFGLARAFGIPVRTFTHEVVTLWYRAPEILLGSRHYSTPVDVWSVGCIFAEMVNRRPLFPGDSEIDELFKIFRILGTPNEETWPGVTALPDFKSTFPKWPPKDLATVVPNLDAAGLNLLSSMLCLDPSKRITARIAVEHEYFKDIKFVP</sequence>